<evidence type="ECO:0000250" key="1"/>
<evidence type="ECO:0000250" key="2">
    <source>
        <dbReference type="UniProtKB" id="O43324"/>
    </source>
</evidence>
<evidence type="ECO:0000269" key="3">
    <source>
    </source>
</evidence>
<evidence type="ECO:0000269" key="4">
    <source>
    </source>
</evidence>
<evidence type="ECO:0000303" key="5">
    <source>
    </source>
</evidence>
<name>MCA3_MOUSE</name>
<comment type="function">
    <text evidence="4">Positive modulator of ATM response to DNA damage.</text>
</comment>
<comment type="subunit">
    <text evidence="2 3">Part of a multisubunit complex that groups tRNA ligases for Arg (RARS1), Asp (DARS1), Gln (QARS1), Ile (IARS1), Leu (LARS1), Lys (KARS1), Met (MARS1) the bifunctional ligase for Glu and Pro (EPRS1) and the auxiliary subunits AIMP1/p43, AIMP2/p38 and EEF1E1/p18 (PubMed:12060739). Can interact simultaneously with MARS1 and EPRS1. Forms a linear complex that contains MARS1, EEF1E1, EPRS1 and AIMP2 that is at the core of the multisubunit complex. Interacts with ATM and ATR. The interaction with ATM, which takes place independently of TP53, is induced by DNA damage that may occur during genotoxic stress or cell growth. The interaction with ATR is enhanced by UV irradiation (By similarity).</text>
</comment>
<comment type="subcellular location">
    <subcellularLocation>
        <location evidence="4">Cytoplasm</location>
    </subcellularLocation>
    <subcellularLocation>
        <location evidence="4">Nucleus</location>
    </subcellularLocation>
    <text>Cytoplasmic under growth arrest conditions. Translocated into the nucleus when growth resumes at S phase and following DNA damage.</text>
</comment>
<comment type="induction">
    <text evidence="4">By DNA damaging agents, such as UV, adriamycin, actinomycin D and cisplatin.</text>
</comment>
<dbReference type="EMBL" id="AK003335">
    <property type="protein sequence ID" value="BAB22723.1"/>
    <property type="molecule type" value="mRNA"/>
</dbReference>
<dbReference type="EMBL" id="BC048466">
    <property type="protein sequence ID" value="AAH48466.1"/>
    <property type="molecule type" value="mRNA"/>
</dbReference>
<dbReference type="CCDS" id="CCDS26465.1"/>
<dbReference type="RefSeq" id="NP_079656.1">
    <property type="nucleotide sequence ID" value="NM_025380.2"/>
</dbReference>
<dbReference type="SMR" id="Q9D1M4"/>
<dbReference type="BioGRID" id="211246">
    <property type="interactions" value="11"/>
</dbReference>
<dbReference type="FunCoup" id="Q9D1M4">
    <property type="interactions" value="3427"/>
</dbReference>
<dbReference type="STRING" id="10090.ENSMUSP00000001757"/>
<dbReference type="MoonProt" id="Q9D1M4"/>
<dbReference type="iPTMnet" id="Q9D1M4"/>
<dbReference type="PhosphoSitePlus" id="Q9D1M4"/>
<dbReference type="SwissPalm" id="Q9D1M4"/>
<dbReference type="jPOST" id="Q9D1M4"/>
<dbReference type="PaxDb" id="10090-ENSMUSP00000001757"/>
<dbReference type="PeptideAtlas" id="Q9D1M4"/>
<dbReference type="ProteomicsDB" id="295705"/>
<dbReference type="Pumba" id="Q9D1M4"/>
<dbReference type="DNASU" id="66143"/>
<dbReference type="Ensembl" id="ENSMUST00000001757.9">
    <property type="protein sequence ID" value="ENSMUSP00000001757.8"/>
    <property type="gene ID" value="ENSMUSG00000001707.9"/>
</dbReference>
<dbReference type="GeneID" id="66143"/>
<dbReference type="KEGG" id="mmu:66143"/>
<dbReference type="UCSC" id="uc007qdw.1">
    <property type="organism name" value="mouse"/>
</dbReference>
<dbReference type="AGR" id="MGI:1913393"/>
<dbReference type="CTD" id="9521"/>
<dbReference type="MGI" id="MGI:1913393">
    <property type="gene designation" value="Eef1e1"/>
</dbReference>
<dbReference type="VEuPathDB" id="HostDB:ENSMUSG00000001707"/>
<dbReference type="eggNOG" id="KOG0867">
    <property type="taxonomic scope" value="Eukaryota"/>
</dbReference>
<dbReference type="GeneTree" id="ENSGT00390000003564"/>
<dbReference type="HOGENOM" id="CLU_098079_0_0_1"/>
<dbReference type="InParanoid" id="Q9D1M4"/>
<dbReference type="OMA" id="NWATGTH"/>
<dbReference type="OrthoDB" id="19141at2759"/>
<dbReference type="PhylomeDB" id="Q9D1M4"/>
<dbReference type="TreeFam" id="TF326005"/>
<dbReference type="Reactome" id="R-MMU-9856649">
    <property type="pathway name" value="Transcriptional and post-translational regulation of MITF-M expression and activity"/>
</dbReference>
<dbReference type="BioGRID-ORCS" id="66143">
    <property type="hits" value="24 hits in 114 CRISPR screens"/>
</dbReference>
<dbReference type="ChiTaRS" id="Eef1e1">
    <property type="organism name" value="mouse"/>
</dbReference>
<dbReference type="PRO" id="PR:Q9D1M4"/>
<dbReference type="Proteomes" id="UP000000589">
    <property type="component" value="Chromosome 13"/>
</dbReference>
<dbReference type="RNAct" id="Q9D1M4">
    <property type="molecule type" value="protein"/>
</dbReference>
<dbReference type="Bgee" id="ENSMUSG00000001707">
    <property type="expression patterns" value="Expressed in embryonic brain and 247 other cell types or tissues"/>
</dbReference>
<dbReference type="GO" id="GO:0017101">
    <property type="term" value="C:aminoacyl-tRNA synthetase multienzyme complex"/>
    <property type="evidence" value="ECO:0000314"/>
    <property type="project" value="CAFA"/>
</dbReference>
<dbReference type="GO" id="GO:0005737">
    <property type="term" value="C:cytoplasm"/>
    <property type="evidence" value="ECO:0000314"/>
    <property type="project" value="UniProtKB"/>
</dbReference>
<dbReference type="GO" id="GO:0005829">
    <property type="term" value="C:cytosol"/>
    <property type="evidence" value="ECO:0007669"/>
    <property type="project" value="Ensembl"/>
</dbReference>
<dbReference type="GO" id="GO:0005730">
    <property type="term" value="C:nucleolus"/>
    <property type="evidence" value="ECO:0007669"/>
    <property type="project" value="Ensembl"/>
</dbReference>
<dbReference type="GO" id="GO:0005654">
    <property type="term" value="C:nucleoplasm"/>
    <property type="evidence" value="ECO:0007669"/>
    <property type="project" value="Ensembl"/>
</dbReference>
<dbReference type="GO" id="GO:0005634">
    <property type="term" value="C:nucleus"/>
    <property type="evidence" value="ECO:0000314"/>
    <property type="project" value="UniProtKB"/>
</dbReference>
<dbReference type="GO" id="GO:1990830">
    <property type="term" value="P:cellular response to leukemia inhibitory factor"/>
    <property type="evidence" value="ECO:0000270"/>
    <property type="project" value="MGI"/>
</dbReference>
<dbReference type="GO" id="GO:0008285">
    <property type="term" value="P:negative regulation of cell population proliferation"/>
    <property type="evidence" value="ECO:0000314"/>
    <property type="project" value="UniProtKB"/>
</dbReference>
<dbReference type="GO" id="GO:0043065">
    <property type="term" value="P:positive regulation of apoptotic process"/>
    <property type="evidence" value="ECO:0000315"/>
    <property type="project" value="UniProtKB"/>
</dbReference>
<dbReference type="GO" id="GO:2001235">
    <property type="term" value="P:positive regulation of apoptotic signaling pathway"/>
    <property type="evidence" value="ECO:0000315"/>
    <property type="project" value="MGI"/>
</dbReference>
<dbReference type="GO" id="GO:2000774">
    <property type="term" value="P:positive regulation of cellular senescence"/>
    <property type="evidence" value="ECO:0007669"/>
    <property type="project" value="Ensembl"/>
</dbReference>
<dbReference type="GO" id="GO:0043517">
    <property type="term" value="P:positive regulation of DNA damage response, signal transduction by p53 class mediator"/>
    <property type="evidence" value="ECO:0000315"/>
    <property type="project" value="UniProtKB"/>
</dbReference>
<dbReference type="GO" id="GO:0006412">
    <property type="term" value="P:translation"/>
    <property type="evidence" value="ECO:0007669"/>
    <property type="project" value="UniProtKB-KW"/>
</dbReference>
<dbReference type="CDD" id="cd10305">
    <property type="entry name" value="GST_C_AIMP3"/>
    <property type="match status" value="1"/>
</dbReference>
<dbReference type="FunFam" id="1.20.1050.10:FF:000032">
    <property type="entry name" value="Eukaryotic translation elongation factor 1 epsilon-1"/>
    <property type="match status" value="1"/>
</dbReference>
<dbReference type="Gene3D" id="1.20.1050.10">
    <property type="match status" value="1"/>
</dbReference>
<dbReference type="Gene3D" id="3.40.30.90">
    <property type="match status" value="1"/>
</dbReference>
<dbReference type="InterPro" id="IPR053837">
    <property type="entry name" value="AIMP3/p18_C"/>
</dbReference>
<dbReference type="InterPro" id="IPR053836">
    <property type="entry name" value="Arc1-like_N"/>
</dbReference>
<dbReference type="InterPro" id="IPR042450">
    <property type="entry name" value="EEF1E1"/>
</dbReference>
<dbReference type="InterPro" id="IPR010987">
    <property type="entry name" value="Glutathione-S-Trfase_C-like"/>
</dbReference>
<dbReference type="InterPro" id="IPR036282">
    <property type="entry name" value="Glutathione-S-Trfase_C_sf"/>
</dbReference>
<dbReference type="PANTHER" id="PTHR44490">
    <property type="entry name" value="EUKARYOTIC TRANSLATION ELONGATION FACTOR 1 EPSILON-1"/>
    <property type="match status" value="1"/>
</dbReference>
<dbReference type="PANTHER" id="PTHR44490:SF1">
    <property type="entry name" value="EUKARYOTIC TRANSLATION ELONGATION FACTOR 1 EPSILON-1"/>
    <property type="match status" value="1"/>
</dbReference>
<dbReference type="Pfam" id="PF21972">
    <property type="entry name" value="Arc1p_N_like"/>
    <property type="match status" value="1"/>
</dbReference>
<dbReference type="SUPFAM" id="SSF47616">
    <property type="entry name" value="GST C-terminal domain-like"/>
    <property type="match status" value="1"/>
</dbReference>
<dbReference type="PROSITE" id="PS50405">
    <property type="entry name" value="GST_CTER"/>
    <property type="match status" value="1"/>
</dbReference>
<feature type="initiator methionine" description="Removed" evidence="2">
    <location>
        <position position="1"/>
    </location>
</feature>
<feature type="chain" id="PRO_0000221133" description="Eukaryotic translation elongation factor 1 epsilon-1">
    <location>
        <begin position="2"/>
        <end position="174"/>
    </location>
</feature>
<feature type="domain" description="GST C-terminal">
    <location>
        <begin position="50"/>
        <end position="173"/>
    </location>
</feature>
<feature type="region of interest" description="N-terminal" evidence="1">
    <location>
        <begin position="2"/>
        <end position="56"/>
    </location>
</feature>
<feature type="region of interest" description="Linker" evidence="1">
    <location>
        <begin position="57"/>
        <end position="63"/>
    </location>
</feature>
<feature type="region of interest" description="C-terminal" evidence="1">
    <location>
        <begin position="64"/>
        <end position="152"/>
    </location>
</feature>
<feature type="coiled-coil region" evidence="1">
    <location>
        <begin position="153"/>
        <end position="169"/>
    </location>
</feature>
<feature type="modified residue" description="N-acetylalanine" evidence="2">
    <location>
        <position position="2"/>
    </location>
</feature>
<feature type="modified residue" description="N6-acetyllysine" evidence="2">
    <location>
        <position position="138"/>
    </location>
</feature>
<reference key="1">
    <citation type="journal article" date="2005" name="Science">
        <title>The transcriptional landscape of the mammalian genome.</title>
        <authorList>
            <person name="Carninci P."/>
            <person name="Kasukawa T."/>
            <person name="Katayama S."/>
            <person name="Gough J."/>
            <person name="Frith M.C."/>
            <person name="Maeda N."/>
            <person name="Oyama R."/>
            <person name="Ravasi T."/>
            <person name="Lenhard B."/>
            <person name="Wells C."/>
            <person name="Kodzius R."/>
            <person name="Shimokawa K."/>
            <person name="Bajic V.B."/>
            <person name="Brenner S.E."/>
            <person name="Batalov S."/>
            <person name="Forrest A.R."/>
            <person name="Zavolan M."/>
            <person name="Davis M.J."/>
            <person name="Wilming L.G."/>
            <person name="Aidinis V."/>
            <person name="Allen J.E."/>
            <person name="Ambesi-Impiombato A."/>
            <person name="Apweiler R."/>
            <person name="Aturaliya R.N."/>
            <person name="Bailey T.L."/>
            <person name="Bansal M."/>
            <person name="Baxter L."/>
            <person name="Beisel K.W."/>
            <person name="Bersano T."/>
            <person name="Bono H."/>
            <person name="Chalk A.M."/>
            <person name="Chiu K.P."/>
            <person name="Choudhary V."/>
            <person name="Christoffels A."/>
            <person name="Clutterbuck D.R."/>
            <person name="Crowe M.L."/>
            <person name="Dalla E."/>
            <person name="Dalrymple B.P."/>
            <person name="de Bono B."/>
            <person name="Della Gatta G."/>
            <person name="di Bernardo D."/>
            <person name="Down T."/>
            <person name="Engstrom P."/>
            <person name="Fagiolini M."/>
            <person name="Faulkner G."/>
            <person name="Fletcher C.F."/>
            <person name="Fukushima T."/>
            <person name="Furuno M."/>
            <person name="Futaki S."/>
            <person name="Gariboldi M."/>
            <person name="Georgii-Hemming P."/>
            <person name="Gingeras T.R."/>
            <person name="Gojobori T."/>
            <person name="Green R.E."/>
            <person name="Gustincich S."/>
            <person name="Harbers M."/>
            <person name="Hayashi Y."/>
            <person name="Hensch T.K."/>
            <person name="Hirokawa N."/>
            <person name="Hill D."/>
            <person name="Huminiecki L."/>
            <person name="Iacono M."/>
            <person name="Ikeo K."/>
            <person name="Iwama A."/>
            <person name="Ishikawa T."/>
            <person name="Jakt M."/>
            <person name="Kanapin A."/>
            <person name="Katoh M."/>
            <person name="Kawasawa Y."/>
            <person name="Kelso J."/>
            <person name="Kitamura H."/>
            <person name="Kitano H."/>
            <person name="Kollias G."/>
            <person name="Krishnan S.P."/>
            <person name="Kruger A."/>
            <person name="Kummerfeld S.K."/>
            <person name="Kurochkin I.V."/>
            <person name="Lareau L.F."/>
            <person name="Lazarevic D."/>
            <person name="Lipovich L."/>
            <person name="Liu J."/>
            <person name="Liuni S."/>
            <person name="McWilliam S."/>
            <person name="Madan Babu M."/>
            <person name="Madera M."/>
            <person name="Marchionni L."/>
            <person name="Matsuda H."/>
            <person name="Matsuzawa S."/>
            <person name="Miki H."/>
            <person name="Mignone F."/>
            <person name="Miyake S."/>
            <person name="Morris K."/>
            <person name="Mottagui-Tabar S."/>
            <person name="Mulder N."/>
            <person name="Nakano N."/>
            <person name="Nakauchi H."/>
            <person name="Ng P."/>
            <person name="Nilsson R."/>
            <person name="Nishiguchi S."/>
            <person name="Nishikawa S."/>
            <person name="Nori F."/>
            <person name="Ohara O."/>
            <person name="Okazaki Y."/>
            <person name="Orlando V."/>
            <person name="Pang K.C."/>
            <person name="Pavan W.J."/>
            <person name="Pavesi G."/>
            <person name="Pesole G."/>
            <person name="Petrovsky N."/>
            <person name="Piazza S."/>
            <person name="Reed J."/>
            <person name="Reid J.F."/>
            <person name="Ring B.Z."/>
            <person name="Ringwald M."/>
            <person name="Rost B."/>
            <person name="Ruan Y."/>
            <person name="Salzberg S.L."/>
            <person name="Sandelin A."/>
            <person name="Schneider C."/>
            <person name="Schoenbach C."/>
            <person name="Sekiguchi K."/>
            <person name="Semple C.A."/>
            <person name="Seno S."/>
            <person name="Sessa L."/>
            <person name="Sheng Y."/>
            <person name="Shibata Y."/>
            <person name="Shimada H."/>
            <person name="Shimada K."/>
            <person name="Silva D."/>
            <person name="Sinclair B."/>
            <person name="Sperling S."/>
            <person name="Stupka E."/>
            <person name="Sugiura K."/>
            <person name="Sultana R."/>
            <person name="Takenaka Y."/>
            <person name="Taki K."/>
            <person name="Tammoja K."/>
            <person name="Tan S.L."/>
            <person name="Tang S."/>
            <person name="Taylor M.S."/>
            <person name="Tegner J."/>
            <person name="Teichmann S.A."/>
            <person name="Ueda H.R."/>
            <person name="van Nimwegen E."/>
            <person name="Verardo R."/>
            <person name="Wei C.L."/>
            <person name="Yagi K."/>
            <person name="Yamanishi H."/>
            <person name="Zabarovsky E."/>
            <person name="Zhu S."/>
            <person name="Zimmer A."/>
            <person name="Hide W."/>
            <person name="Bult C."/>
            <person name="Grimmond S.M."/>
            <person name="Teasdale R.D."/>
            <person name="Liu E.T."/>
            <person name="Brusic V."/>
            <person name="Quackenbush J."/>
            <person name="Wahlestedt C."/>
            <person name="Mattick J.S."/>
            <person name="Hume D.A."/>
            <person name="Kai C."/>
            <person name="Sasaki D."/>
            <person name="Tomaru Y."/>
            <person name="Fukuda S."/>
            <person name="Kanamori-Katayama M."/>
            <person name="Suzuki M."/>
            <person name="Aoki J."/>
            <person name="Arakawa T."/>
            <person name="Iida J."/>
            <person name="Imamura K."/>
            <person name="Itoh M."/>
            <person name="Kato T."/>
            <person name="Kawaji H."/>
            <person name="Kawagashira N."/>
            <person name="Kawashima T."/>
            <person name="Kojima M."/>
            <person name="Kondo S."/>
            <person name="Konno H."/>
            <person name="Nakano K."/>
            <person name="Ninomiya N."/>
            <person name="Nishio T."/>
            <person name="Okada M."/>
            <person name="Plessy C."/>
            <person name="Shibata K."/>
            <person name="Shiraki T."/>
            <person name="Suzuki S."/>
            <person name="Tagami M."/>
            <person name="Waki K."/>
            <person name="Watahiki A."/>
            <person name="Okamura-Oho Y."/>
            <person name="Suzuki H."/>
            <person name="Kawai J."/>
            <person name="Hayashizaki Y."/>
        </authorList>
    </citation>
    <scope>NUCLEOTIDE SEQUENCE [LARGE SCALE MRNA]</scope>
    <source>
        <strain>C57BL/6J</strain>
        <tissue>Embryo</tissue>
    </source>
</reference>
<reference key="2">
    <citation type="journal article" date="2004" name="Genome Res.">
        <title>The status, quality, and expansion of the NIH full-length cDNA project: the Mammalian Gene Collection (MGC).</title>
        <authorList>
            <consortium name="The MGC Project Team"/>
        </authorList>
    </citation>
    <scope>NUCLEOTIDE SEQUENCE [LARGE SCALE MRNA]</scope>
    <source>
        <tissue>Brain</tissue>
    </source>
</reference>
<reference key="3">
    <citation type="journal article" date="2002" name="Proc. Natl. Acad. Sci. U.S.A.">
        <title>p38 is essential for the assembly and stability of macromolecular tRNA synthetase complex: implications for its physiological significance.</title>
        <authorList>
            <person name="Kim J.Y."/>
            <person name="Kang Y.-S."/>
            <person name="Lee J.-W."/>
            <person name="Kim H.J."/>
            <person name="Ahn Y.H."/>
            <person name="Park H."/>
            <person name="Ko Y.-G."/>
            <person name="Kim S."/>
        </authorList>
    </citation>
    <scope>SUBUNIT</scope>
</reference>
<reference key="4">
    <citation type="journal article" date="2005" name="Cell">
        <title>The haploinsufficient tumor suppressor p18 upregulates p53 via interactions with ATM/ATR.</title>
        <authorList>
            <person name="Park B.-J."/>
            <person name="Kang J.W."/>
            <person name="Lee S.W."/>
            <person name="Choi S.-J."/>
            <person name="Shin Y.K."/>
            <person name="Ahn Y.H."/>
            <person name="Choi Y.H."/>
            <person name="Choi D."/>
            <person name="Lee K.S."/>
            <person name="Kim S."/>
        </authorList>
    </citation>
    <scope>FUNCTION</scope>
    <scope>SUBCELLULAR LOCATION</scope>
    <scope>INDUCTION</scope>
</reference>
<reference key="5">
    <citation type="journal article" date="2010" name="Cell">
        <title>A tissue-specific atlas of mouse protein phosphorylation and expression.</title>
        <authorList>
            <person name="Huttlin E.L."/>
            <person name="Jedrychowski M.P."/>
            <person name="Elias J.E."/>
            <person name="Goswami T."/>
            <person name="Rad R."/>
            <person name="Beausoleil S.A."/>
            <person name="Villen J."/>
            <person name="Haas W."/>
            <person name="Sowa M.E."/>
            <person name="Gygi S.P."/>
        </authorList>
    </citation>
    <scope>IDENTIFICATION BY MASS SPECTROMETRY [LARGE SCALE ANALYSIS]</scope>
    <source>
        <tissue>Brain</tissue>
        <tissue>Brown adipose tissue</tissue>
        <tissue>Heart</tissue>
        <tissue>Kidney</tissue>
        <tissue>Liver</tissue>
        <tissue>Lung</tissue>
        <tissue>Pancreas</tissue>
        <tissue>Spleen</tissue>
        <tissue>Testis</tissue>
    </source>
</reference>
<accession>Q9D1M4</accession>
<proteinExistence type="evidence at protein level"/>
<gene>
    <name type="primary">Eef1e1</name>
</gene>
<keyword id="KW-0007">Acetylation</keyword>
<keyword id="KW-0175">Coiled coil</keyword>
<keyword id="KW-0963">Cytoplasm</keyword>
<keyword id="KW-0539">Nucleus</keyword>
<keyword id="KW-0648">Protein biosynthesis</keyword>
<keyword id="KW-1185">Reference proteome</keyword>
<sequence length="174" mass="19859">MAAAAELRLLEKSLGLKPGNKYSAQGERQIPVLQTNNGPSLMGLSTIATHLVKQASKEHLLGSTAEEKAMVQQWLEFRVTRVDGHSSKEDTQTLLKDLNSYLEDKVYLAGHNITLADILLYYGLHRFIVDLTVQEKEKYLNVSRWFCHIQHYPDIRQHLSSIVFIKNRLYANSH</sequence>
<protein>
    <recommendedName>
        <fullName>Eukaryotic translation elongation factor 1 epsilon-1</fullName>
    </recommendedName>
    <alternativeName>
        <fullName>Elongation factor p18</fullName>
    </alternativeName>
    <alternativeName>
        <fullName evidence="5">Multisynthase complex auxiliary component p18</fullName>
    </alternativeName>
</protein>
<organism>
    <name type="scientific">Mus musculus</name>
    <name type="common">Mouse</name>
    <dbReference type="NCBI Taxonomy" id="10090"/>
    <lineage>
        <taxon>Eukaryota</taxon>
        <taxon>Metazoa</taxon>
        <taxon>Chordata</taxon>
        <taxon>Craniata</taxon>
        <taxon>Vertebrata</taxon>
        <taxon>Euteleostomi</taxon>
        <taxon>Mammalia</taxon>
        <taxon>Eutheria</taxon>
        <taxon>Euarchontoglires</taxon>
        <taxon>Glires</taxon>
        <taxon>Rodentia</taxon>
        <taxon>Myomorpha</taxon>
        <taxon>Muroidea</taxon>
        <taxon>Muridae</taxon>
        <taxon>Murinae</taxon>
        <taxon>Mus</taxon>
        <taxon>Mus</taxon>
    </lineage>
</organism>